<evidence type="ECO:0000255" key="1">
    <source>
        <dbReference type="HAMAP-Rule" id="MF_00139"/>
    </source>
</evidence>
<evidence type="ECO:0000255" key="2">
    <source>
        <dbReference type="PROSITE-ProRule" id="PRU01202"/>
    </source>
</evidence>
<dbReference type="EC" id="2.1.2.3" evidence="1"/>
<dbReference type="EC" id="3.5.4.10" evidence="1"/>
<dbReference type="EMBL" id="CP000261">
    <property type="protein sequence ID" value="ABF35080.1"/>
    <property type="molecule type" value="Genomic_DNA"/>
</dbReference>
<dbReference type="SMR" id="Q1JE78"/>
<dbReference type="KEGG" id="spj:MGAS2096_Spy0028"/>
<dbReference type="HOGENOM" id="CLU_016316_5_2_9"/>
<dbReference type="UniPathway" id="UPA00074">
    <property type="reaction ID" value="UER00133"/>
</dbReference>
<dbReference type="UniPathway" id="UPA00074">
    <property type="reaction ID" value="UER00135"/>
</dbReference>
<dbReference type="GO" id="GO:0005829">
    <property type="term" value="C:cytosol"/>
    <property type="evidence" value="ECO:0007669"/>
    <property type="project" value="TreeGrafter"/>
</dbReference>
<dbReference type="GO" id="GO:0003937">
    <property type="term" value="F:IMP cyclohydrolase activity"/>
    <property type="evidence" value="ECO:0007669"/>
    <property type="project" value="UniProtKB-UniRule"/>
</dbReference>
<dbReference type="GO" id="GO:0004643">
    <property type="term" value="F:phosphoribosylaminoimidazolecarboxamide formyltransferase activity"/>
    <property type="evidence" value="ECO:0007669"/>
    <property type="project" value="UniProtKB-UniRule"/>
</dbReference>
<dbReference type="GO" id="GO:0006189">
    <property type="term" value="P:'de novo' IMP biosynthetic process"/>
    <property type="evidence" value="ECO:0007669"/>
    <property type="project" value="UniProtKB-UniRule"/>
</dbReference>
<dbReference type="CDD" id="cd01421">
    <property type="entry name" value="IMPCH"/>
    <property type="match status" value="1"/>
</dbReference>
<dbReference type="FunFam" id="3.40.140.20:FF:000001">
    <property type="entry name" value="Bifunctional purine biosynthesis protein PurH"/>
    <property type="match status" value="1"/>
</dbReference>
<dbReference type="FunFam" id="3.40.140.20:FF:000002">
    <property type="entry name" value="Bifunctional purine biosynthesis protein PurH"/>
    <property type="match status" value="1"/>
</dbReference>
<dbReference type="FunFam" id="3.40.50.1380:FF:000001">
    <property type="entry name" value="Bifunctional purine biosynthesis protein PurH"/>
    <property type="match status" value="1"/>
</dbReference>
<dbReference type="Gene3D" id="3.40.140.20">
    <property type="match status" value="2"/>
</dbReference>
<dbReference type="Gene3D" id="3.40.50.1380">
    <property type="entry name" value="Methylglyoxal synthase-like domain"/>
    <property type="match status" value="1"/>
</dbReference>
<dbReference type="HAMAP" id="MF_00139">
    <property type="entry name" value="PurH"/>
    <property type="match status" value="1"/>
</dbReference>
<dbReference type="InterPro" id="IPR024051">
    <property type="entry name" value="AICAR_Tfase_dup_dom_sf"/>
</dbReference>
<dbReference type="InterPro" id="IPR016193">
    <property type="entry name" value="Cytidine_deaminase-like"/>
</dbReference>
<dbReference type="InterPro" id="IPR011607">
    <property type="entry name" value="MGS-like_dom"/>
</dbReference>
<dbReference type="InterPro" id="IPR036914">
    <property type="entry name" value="MGS-like_dom_sf"/>
</dbReference>
<dbReference type="InterPro" id="IPR002695">
    <property type="entry name" value="PurH-like"/>
</dbReference>
<dbReference type="NCBIfam" id="NF002049">
    <property type="entry name" value="PRK00881.1"/>
    <property type="match status" value="1"/>
</dbReference>
<dbReference type="NCBIfam" id="TIGR00355">
    <property type="entry name" value="purH"/>
    <property type="match status" value="1"/>
</dbReference>
<dbReference type="PANTHER" id="PTHR11692:SF0">
    <property type="entry name" value="BIFUNCTIONAL PURINE BIOSYNTHESIS PROTEIN ATIC"/>
    <property type="match status" value="1"/>
</dbReference>
<dbReference type="PANTHER" id="PTHR11692">
    <property type="entry name" value="BIFUNCTIONAL PURINE BIOSYNTHESIS PROTEIN PURH"/>
    <property type="match status" value="1"/>
</dbReference>
<dbReference type="Pfam" id="PF01808">
    <property type="entry name" value="AICARFT_IMPCHas"/>
    <property type="match status" value="1"/>
</dbReference>
<dbReference type="Pfam" id="PF02142">
    <property type="entry name" value="MGS"/>
    <property type="match status" value="1"/>
</dbReference>
<dbReference type="PIRSF" id="PIRSF000414">
    <property type="entry name" value="AICARFT_IMPCHas"/>
    <property type="match status" value="1"/>
</dbReference>
<dbReference type="SMART" id="SM00798">
    <property type="entry name" value="AICARFT_IMPCHas"/>
    <property type="match status" value="1"/>
</dbReference>
<dbReference type="SMART" id="SM00851">
    <property type="entry name" value="MGS"/>
    <property type="match status" value="1"/>
</dbReference>
<dbReference type="SUPFAM" id="SSF53927">
    <property type="entry name" value="Cytidine deaminase-like"/>
    <property type="match status" value="1"/>
</dbReference>
<dbReference type="SUPFAM" id="SSF52335">
    <property type="entry name" value="Methylglyoxal synthase-like"/>
    <property type="match status" value="1"/>
</dbReference>
<dbReference type="PROSITE" id="PS51855">
    <property type="entry name" value="MGS"/>
    <property type="match status" value="1"/>
</dbReference>
<proteinExistence type="inferred from homology"/>
<protein>
    <recommendedName>
        <fullName evidence="1">Bifunctional purine biosynthesis protein PurH</fullName>
    </recommendedName>
    <domain>
        <recommendedName>
            <fullName evidence="1">Phosphoribosylaminoimidazolecarboxamide formyltransferase</fullName>
            <ecNumber evidence="1">2.1.2.3</ecNumber>
        </recommendedName>
        <alternativeName>
            <fullName evidence="1">AICAR transformylase</fullName>
        </alternativeName>
    </domain>
    <domain>
        <recommendedName>
            <fullName evidence="1">IMP cyclohydrolase</fullName>
            <ecNumber evidence="1">3.5.4.10</ecNumber>
        </recommendedName>
        <alternativeName>
            <fullName evidence="1">ATIC</fullName>
        </alternativeName>
        <alternativeName>
            <fullName evidence="1">IMP synthase</fullName>
        </alternativeName>
        <alternativeName>
            <fullName evidence="1">Inosinicase</fullName>
        </alternativeName>
    </domain>
</protein>
<accession>Q1JE78</accession>
<sequence length="515" mass="56205">MTKRALISVSDKSGIVDFAKELKNLGWDIISTGGTKVALDNAGVETIAIDDVTGFPEMMDGRVKTLHPNIHGGLLARRDADSHLQAAKDNNIELIDLVVVNLYPFKETILRPDITYDLAVENIDIGGPSMLRSAAKNHASVTVVVDPADYATVLGELADAGQTTFETRQRLAAKVFRHTAAYDALIAEYFTTQVGEAKPEKLTITYDLKQAMRYGENPQQDADFYQKALPTDYSIASAKQLNGKELSFNNIRDADAAIRIIRDFKDRPTVVVLKHMNPCGIGQADDIETAWDYAYEADPVSIFGGIVVLNREVDAATAKKMHPIFLEIIIAPSYSEEALAILTNKKKNLRILELPFDAQAASEVEAEYTGVVGGLLVQNQDVVAENPSDWQVVTDRQPTEQEATALEFAWKAIKYVKSNGIIITNDHMTLGLGAGQTNRVGSVKIAIEQAKDHLDGAVLASDAFFPFADNIEEIAAAGIKAIIQPGGSVRDQDSIDAANKHGLTMIFTGVRHFRH</sequence>
<organism>
    <name type="scientific">Streptococcus pyogenes serotype M12 (strain MGAS2096)</name>
    <dbReference type="NCBI Taxonomy" id="370553"/>
    <lineage>
        <taxon>Bacteria</taxon>
        <taxon>Bacillati</taxon>
        <taxon>Bacillota</taxon>
        <taxon>Bacilli</taxon>
        <taxon>Lactobacillales</taxon>
        <taxon>Streptococcaceae</taxon>
        <taxon>Streptococcus</taxon>
    </lineage>
</organism>
<keyword id="KW-0378">Hydrolase</keyword>
<keyword id="KW-0511">Multifunctional enzyme</keyword>
<keyword id="KW-0658">Purine biosynthesis</keyword>
<keyword id="KW-0808">Transferase</keyword>
<reference key="1">
    <citation type="journal article" date="2006" name="Proc. Natl. Acad. Sci. U.S.A.">
        <title>Molecular genetic anatomy of inter- and intraserotype variation in the human bacterial pathogen group A Streptococcus.</title>
        <authorList>
            <person name="Beres S.B."/>
            <person name="Richter E.W."/>
            <person name="Nagiec M.J."/>
            <person name="Sumby P."/>
            <person name="Porcella S.F."/>
            <person name="DeLeo F.R."/>
            <person name="Musser J.M."/>
        </authorList>
    </citation>
    <scope>NUCLEOTIDE SEQUENCE [LARGE SCALE GENOMIC DNA]</scope>
    <source>
        <strain>MGAS2096</strain>
    </source>
</reference>
<name>PUR9_STRPB</name>
<gene>
    <name evidence="1" type="primary">purH</name>
    <name type="ordered locus">MGAS2096_Spy0028</name>
</gene>
<comment type="catalytic activity">
    <reaction evidence="1">
        <text>(6R)-10-formyltetrahydrofolate + 5-amino-1-(5-phospho-beta-D-ribosyl)imidazole-4-carboxamide = 5-formamido-1-(5-phospho-D-ribosyl)imidazole-4-carboxamide + (6S)-5,6,7,8-tetrahydrofolate</text>
        <dbReference type="Rhea" id="RHEA:22192"/>
        <dbReference type="ChEBI" id="CHEBI:57453"/>
        <dbReference type="ChEBI" id="CHEBI:58467"/>
        <dbReference type="ChEBI" id="CHEBI:58475"/>
        <dbReference type="ChEBI" id="CHEBI:195366"/>
        <dbReference type="EC" id="2.1.2.3"/>
    </reaction>
</comment>
<comment type="catalytic activity">
    <reaction evidence="1">
        <text>IMP + H2O = 5-formamido-1-(5-phospho-D-ribosyl)imidazole-4-carboxamide</text>
        <dbReference type="Rhea" id="RHEA:18445"/>
        <dbReference type="ChEBI" id="CHEBI:15377"/>
        <dbReference type="ChEBI" id="CHEBI:58053"/>
        <dbReference type="ChEBI" id="CHEBI:58467"/>
        <dbReference type="EC" id="3.5.4.10"/>
    </reaction>
</comment>
<comment type="pathway">
    <text evidence="1">Purine metabolism; IMP biosynthesis via de novo pathway; 5-formamido-1-(5-phospho-D-ribosyl)imidazole-4-carboxamide from 5-amino-1-(5-phospho-D-ribosyl)imidazole-4-carboxamide (10-formyl THF route): step 1/1.</text>
</comment>
<comment type="pathway">
    <text evidence="1">Purine metabolism; IMP biosynthesis via de novo pathway; IMP from 5-formamido-1-(5-phospho-D-ribosyl)imidazole-4-carboxamide: step 1/1.</text>
</comment>
<comment type="domain">
    <text evidence="1">The IMP cyclohydrolase activity resides in the N-terminal region.</text>
</comment>
<comment type="similarity">
    <text evidence="1">Belongs to the PurH family.</text>
</comment>
<feature type="chain" id="PRO_1000018968" description="Bifunctional purine biosynthesis protein PurH">
    <location>
        <begin position="1"/>
        <end position="515"/>
    </location>
</feature>
<feature type="domain" description="MGS-like" evidence="2">
    <location>
        <begin position="1"/>
        <end position="145"/>
    </location>
</feature>